<name>NUOB_LEGPL</name>
<dbReference type="EC" id="7.1.1.-" evidence="2"/>
<dbReference type="EMBL" id="CR628337">
    <property type="protein sequence ID" value="CAH16945.1"/>
    <property type="molecule type" value="Genomic_DNA"/>
</dbReference>
<dbReference type="RefSeq" id="WP_010948477.1">
    <property type="nucleotide sequence ID" value="NC_006369.1"/>
</dbReference>
<dbReference type="SMR" id="Q5WT21"/>
<dbReference type="KEGG" id="lpf:lpl2704"/>
<dbReference type="LegioList" id="lpl2704"/>
<dbReference type="HOGENOM" id="CLU_055737_7_0_6"/>
<dbReference type="Proteomes" id="UP000002517">
    <property type="component" value="Chromosome"/>
</dbReference>
<dbReference type="GO" id="GO:0005886">
    <property type="term" value="C:plasma membrane"/>
    <property type="evidence" value="ECO:0007669"/>
    <property type="project" value="UniProtKB-SubCell"/>
</dbReference>
<dbReference type="GO" id="GO:0045271">
    <property type="term" value="C:respiratory chain complex I"/>
    <property type="evidence" value="ECO:0007669"/>
    <property type="project" value="TreeGrafter"/>
</dbReference>
<dbReference type="GO" id="GO:0051539">
    <property type="term" value="F:4 iron, 4 sulfur cluster binding"/>
    <property type="evidence" value="ECO:0007669"/>
    <property type="project" value="UniProtKB-KW"/>
</dbReference>
<dbReference type="GO" id="GO:0005506">
    <property type="term" value="F:iron ion binding"/>
    <property type="evidence" value="ECO:0007669"/>
    <property type="project" value="UniProtKB-UniRule"/>
</dbReference>
<dbReference type="GO" id="GO:0008137">
    <property type="term" value="F:NADH dehydrogenase (ubiquinone) activity"/>
    <property type="evidence" value="ECO:0007669"/>
    <property type="project" value="InterPro"/>
</dbReference>
<dbReference type="GO" id="GO:0050136">
    <property type="term" value="F:NADH:ubiquinone reductase (non-electrogenic) activity"/>
    <property type="evidence" value="ECO:0007669"/>
    <property type="project" value="UniProtKB-UniRule"/>
</dbReference>
<dbReference type="GO" id="GO:0048038">
    <property type="term" value="F:quinone binding"/>
    <property type="evidence" value="ECO:0007669"/>
    <property type="project" value="UniProtKB-KW"/>
</dbReference>
<dbReference type="GO" id="GO:0009060">
    <property type="term" value="P:aerobic respiration"/>
    <property type="evidence" value="ECO:0007669"/>
    <property type="project" value="TreeGrafter"/>
</dbReference>
<dbReference type="GO" id="GO:0015990">
    <property type="term" value="P:electron transport coupled proton transport"/>
    <property type="evidence" value="ECO:0007669"/>
    <property type="project" value="TreeGrafter"/>
</dbReference>
<dbReference type="FunFam" id="3.40.50.12280:FF:000001">
    <property type="entry name" value="NADH-quinone oxidoreductase subunit B 2"/>
    <property type="match status" value="1"/>
</dbReference>
<dbReference type="Gene3D" id="3.40.50.12280">
    <property type="match status" value="1"/>
</dbReference>
<dbReference type="HAMAP" id="MF_01356">
    <property type="entry name" value="NDH1_NuoB"/>
    <property type="match status" value="1"/>
</dbReference>
<dbReference type="InterPro" id="IPR006137">
    <property type="entry name" value="NADH_UbQ_OxRdtase-like_20kDa"/>
</dbReference>
<dbReference type="InterPro" id="IPR006138">
    <property type="entry name" value="NADH_UQ_OxRdtase_20Kd_su"/>
</dbReference>
<dbReference type="NCBIfam" id="TIGR01957">
    <property type="entry name" value="nuoB_fam"/>
    <property type="match status" value="1"/>
</dbReference>
<dbReference type="NCBIfam" id="NF005012">
    <property type="entry name" value="PRK06411.1"/>
    <property type="match status" value="1"/>
</dbReference>
<dbReference type="PANTHER" id="PTHR11995">
    <property type="entry name" value="NADH DEHYDROGENASE"/>
    <property type="match status" value="1"/>
</dbReference>
<dbReference type="PANTHER" id="PTHR11995:SF14">
    <property type="entry name" value="NADH DEHYDROGENASE [UBIQUINONE] IRON-SULFUR PROTEIN 7, MITOCHONDRIAL"/>
    <property type="match status" value="1"/>
</dbReference>
<dbReference type="Pfam" id="PF01058">
    <property type="entry name" value="Oxidored_q6"/>
    <property type="match status" value="1"/>
</dbReference>
<dbReference type="SUPFAM" id="SSF56770">
    <property type="entry name" value="HydA/Nqo6-like"/>
    <property type="match status" value="1"/>
</dbReference>
<dbReference type="PROSITE" id="PS01150">
    <property type="entry name" value="COMPLEX1_20K"/>
    <property type="match status" value="1"/>
</dbReference>
<accession>Q5WT21</accession>
<reference key="1">
    <citation type="journal article" date="2004" name="Nat. Genet.">
        <title>Evidence in the Legionella pneumophila genome for exploitation of host cell functions and high genome plasticity.</title>
        <authorList>
            <person name="Cazalet C."/>
            <person name="Rusniok C."/>
            <person name="Brueggemann H."/>
            <person name="Zidane N."/>
            <person name="Magnier A."/>
            <person name="Ma L."/>
            <person name="Tichit M."/>
            <person name="Jarraud S."/>
            <person name="Bouchier C."/>
            <person name="Vandenesch F."/>
            <person name="Kunst F."/>
            <person name="Etienne J."/>
            <person name="Glaser P."/>
            <person name="Buchrieser C."/>
        </authorList>
    </citation>
    <scope>NUCLEOTIDE SEQUENCE [LARGE SCALE GENOMIC DNA]</scope>
    <source>
        <strain>Lens</strain>
    </source>
</reference>
<feature type="chain" id="PRO_0000358417" description="NADH-quinone oxidoreductase subunit B">
    <location>
        <begin position="1"/>
        <end position="158"/>
    </location>
</feature>
<feature type="binding site" evidence="2">
    <location>
        <position position="37"/>
    </location>
    <ligand>
        <name>[4Fe-4S] cluster</name>
        <dbReference type="ChEBI" id="CHEBI:49883"/>
    </ligand>
</feature>
<feature type="binding site" evidence="2">
    <location>
        <position position="38"/>
    </location>
    <ligand>
        <name>[4Fe-4S] cluster</name>
        <dbReference type="ChEBI" id="CHEBI:49883"/>
    </ligand>
</feature>
<feature type="binding site" evidence="2">
    <location>
        <position position="102"/>
    </location>
    <ligand>
        <name>[4Fe-4S] cluster</name>
        <dbReference type="ChEBI" id="CHEBI:49883"/>
    </ligand>
</feature>
<feature type="binding site" evidence="2">
    <location>
        <position position="132"/>
    </location>
    <ligand>
        <name>[4Fe-4S] cluster</name>
        <dbReference type="ChEBI" id="CHEBI:49883"/>
    </ligand>
</feature>
<protein>
    <recommendedName>
        <fullName evidence="2">NADH-quinone oxidoreductase subunit B</fullName>
        <ecNumber evidence="2">7.1.1.-</ecNumber>
    </recommendedName>
    <alternativeName>
        <fullName evidence="2">NADH dehydrogenase I subunit B</fullName>
    </alternativeName>
    <alternativeName>
        <fullName evidence="2">NDH-1 subunit B</fullName>
    </alternativeName>
</protein>
<proteinExistence type="inferred from homology"/>
<keyword id="KW-0004">4Fe-4S</keyword>
<keyword id="KW-0997">Cell inner membrane</keyword>
<keyword id="KW-1003">Cell membrane</keyword>
<keyword id="KW-0408">Iron</keyword>
<keyword id="KW-0411">Iron-sulfur</keyword>
<keyword id="KW-0472">Membrane</keyword>
<keyword id="KW-0479">Metal-binding</keyword>
<keyword id="KW-0520">NAD</keyword>
<keyword id="KW-0874">Quinone</keyword>
<keyword id="KW-1278">Translocase</keyword>
<keyword id="KW-0813">Transport</keyword>
<keyword id="KW-0830">Ubiquinone</keyword>
<gene>
    <name evidence="2" type="primary">nuoB</name>
    <name type="ordered locus">lpl2704</name>
</gene>
<comment type="function">
    <text evidence="1">NDH-1 shuttles electrons from NADH, via FMN and iron-sulfur (Fe-S) centers, to quinones in the respiratory chain. Couples the redox reaction to proton translocation (for every two electrons transferred, four hydrogen ions are translocated across the cytoplasmic membrane), and thus conserves the redox energy in a proton gradient (By similarity).</text>
</comment>
<comment type="catalytic activity">
    <reaction evidence="2">
        <text>a quinone + NADH + 5 H(+)(in) = a quinol + NAD(+) + 4 H(+)(out)</text>
        <dbReference type="Rhea" id="RHEA:57888"/>
        <dbReference type="ChEBI" id="CHEBI:15378"/>
        <dbReference type="ChEBI" id="CHEBI:24646"/>
        <dbReference type="ChEBI" id="CHEBI:57540"/>
        <dbReference type="ChEBI" id="CHEBI:57945"/>
        <dbReference type="ChEBI" id="CHEBI:132124"/>
    </reaction>
</comment>
<comment type="cofactor">
    <cofactor evidence="2">
        <name>[4Fe-4S] cluster</name>
        <dbReference type="ChEBI" id="CHEBI:49883"/>
    </cofactor>
    <text evidence="2">Binds 1 [4Fe-4S] cluster.</text>
</comment>
<comment type="subunit">
    <text evidence="2">NDH-1 is composed of 14 different subunits. Subunits NuoB, C, D, E, F, and G constitute the peripheral sector of the complex.</text>
</comment>
<comment type="subcellular location">
    <subcellularLocation>
        <location evidence="2">Cell inner membrane</location>
        <topology evidence="2">Peripheral membrane protein</topology>
        <orientation evidence="2">Cytoplasmic side</orientation>
    </subcellularLocation>
</comment>
<comment type="similarity">
    <text evidence="2">Belongs to the complex I 20 kDa subunit family.</text>
</comment>
<evidence type="ECO:0000250" key="1"/>
<evidence type="ECO:0000255" key="2">
    <source>
        <dbReference type="HAMAP-Rule" id="MF_01356"/>
    </source>
</evidence>
<organism>
    <name type="scientific">Legionella pneumophila (strain Lens)</name>
    <dbReference type="NCBI Taxonomy" id="297245"/>
    <lineage>
        <taxon>Bacteria</taxon>
        <taxon>Pseudomonadati</taxon>
        <taxon>Pseudomonadota</taxon>
        <taxon>Gammaproteobacteria</taxon>
        <taxon>Legionellales</taxon>
        <taxon>Legionellaceae</taxon>
        <taxon>Legionella</taxon>
    </lineage>
</organism>
<sequence>MAVAELEKKGFELTTVEKLVGWARSGSMWPMTFGLACCAVEMMHVGAARYDLDRFGIIFRPSPRQSDVMIVAGTLCNKMAPALRKVYDQMPEPRWVISMGSCANGGGYYHYSYSVVRGCDRIVPVDVYVPGCPPTAEALLYGIIQLQNKIRRKPVLEA</sequence>